<name>MIAA_STRZT</name>
<comment type="function">
    <text evidence="1">Catalyzes the transfer of a dimethylallyl group onto the adenine at position 37 in tRNAs that read codons beginning with uridine, leading to the formation of N6-(dimethylallyl)adenosine (i(6)A).</text>
</comment>
<comment type="catalytic activity">
    <reaction evidence="1">
        <text>adenosine(37) in tRNA + dimethylallyl diphosphate = N(6)-dimethylallyladenosine(37) in tRNA + diphosphate</text>
        <dbReference type="Rhea" id="RHEA:26482"/>
        <dbReference type="Rhea" id="RHEA-COMP:10162"/>
        <dbReference type="Rhea" id="RHEA-COMP:10375"/>
        <dbReference type="ChEBI" id="CHEBI:33019"/>
        <dbReference type="ChEBI" id="CHEBI:57623"/>
        <dbReference type="ChEBI" id="CHEBI:74411"/>
        <dbReference type="ChEBI" id="CHEBI:74415"/>
        <dbReference type="EC" id="2.5.1.75"/>
    </reaction>
</comment>
<comment type="cofactor">
    <cofactor evidence="1">
        <name>Mg(2+)</name>
        <dbReference type="ChEBI" id="CHEBI:18420"/>
    </cofactor>
</comment>
<comment type="subunit">
    <text evidence="1">Monomer.</text>
</comment>
<comment type="similarity">
    <text evidence="1">Belongs to the IPP transferase family.</text>
</comment>
<reference key="1">
    <citation type="journal article" date="2010" name="Genome Biol.">
        <title>Structure and dynamics of the pan-genome of Streptococcus pneumoniae and closely related species.</title>
        <authorList>
            <person name="Donati C."/>
            <person name="Hiller N.L."/>
            <person name="Tettelin H."/>
            <person name="Muzzi A."/>
            <person name="Croucher N.J."/>
            <person name="Angiuoli S.V."/>
            <person name="Oggioni M."/>
            <person name="Dunning Hotopp J.C."/>
            <person name="Hu F.Z."/>
            <person name="Riley D.R."/>
            <person name="Covacci A."/>
            <person name="Mitchell T.J."/>
            <person name="Bentley S.D."/>
            <person name="Kilian M."/>
            <person name="Ehrlich G.D."/>
            <person name="Rappuoli R."/>
            <person name="Moxon E.R."/>
            <person name="Masignani V."/>
        </authorList>
    </citation>
    <scope>NUCLEOTIDE SEQUENCE [LARGE SCALE GENOMIC DNA]</scope>
    <source>
        <strain>Taiwan19F-14</strain>
    </source>
</reference>
<gene>
    <name evidence="1" type="primary">miaA</name>
    <name type="ordered locus">SPT_0695</name>
</gene>
<feature type="chain" id="PRO_1000191868" description="tRNA dimethylallyltransferase">
    <location>
        <begin position="1"/>
        <end position="294"/>
    </location>
</feature>
<feature type="region of interest" description="Interaction with substrate tRNA" evidence="1">
    <location>
        <begin position="35"/>
        <end position="38"/>
    </location>
</feature>
<feature type="binding site" evidence="1">
    <location>
        <begin position="10"/>
        <end position="17"/>
    </location>
    <ligand>
        <name>ATP</name>
        <dbReference type="ChEBI" id="CHEBI:30616"/>
    </ligand>
</feature>
<feature type="binding site" evidence="1">
    <location>
        <begin position="12"/>
        <end position="17"/>
    </location>
    <ligand>
        <name>substrate</name>
    </ligand>
</feature>
<feature type="site" description="Interaction with substrate tRNA" evidence="1">
    <location>
        <position position="101"/>
    </location>
</feature>
<feature type="site" description="Interaction with substrate tRNA" evidence="1">
    <location>
        <position position="127"/>
    </location>
</feature>
<organism>
    <name type="scientific">Streptococcus pneumoniae (strain Taiwan19F-14)</name>
    <dbReference type="NCBI Taxonomy" id="487213"/>
    <lineage>
        <taxon>Bacteria</taxon>
        <taxon>Bacillati</taxon>
        <taxon>Bacillota</taxon>
        <taxon>Bacilli</taxon>
        <taxon>Lactobacillales</taxon>
        <taxon>Streptococcaceae</taxon>
        <taxon>Streptococcus</taxon>
    </lineage>
</organism>
<sequence>MKTKIIVIVGPTAVGKTALAIEVAKRFNGEVVSGDSQQVYRGLDIGTAKASPEEQAAVLHHLIDVREITESYSAFDFVSEAKMTIEDIHSRGKLAIIAGGTGLYIQSLLEGYHLGGETPHEEILAYRASLEPYSDEELAHLVEQAGLEIPQFNRRRAMRALEIAHFGQDLENQETLYEPLIICLDDERSQLYERINHRVDLMFEAGLLDEAKWLFDHSPNVQAAKGIGYKELFPYFRGEQTFEEASESLKQATRRFAKRQLTWFRNRMQVTFYQIGESGVQDRILSQIEEFLDD</sequence>
<proteinExistence type="inferred from homology"/>
<evidence type="ECO:0000255" key="1">
    <source>
        <dbReference type="HAMAP-Rule" id="MF_00185"/>
    </source>
</evidence>
<protein>
    <recommendedName>
        <fullName evidence="1">tRNA dimethylallyltransferase</fullName>
        <ecNumber evidence="1">2.5.1.75</ecNumber>
    </recommendedName>
    <alternativeName>
        <fullName evidence="1">Dimethylallyl diphosphate:tRNA dimethylallyltransferase</fullName>
        <shortName evidence="1">DMAPP:tRNA dimethylallyltransferase</shortName>
        <shortName evidence="1">DMATase</shortName>
    </alternativeName>
    <alternativeName>
        <fullName evidence="1">Isopentenyl-diphosphate:tRNA isopentenyltransferase</fullName>
        <shortName evidence="1">IPP transferase</shortName>
        <shortName evidence="1">IPPT</shortName>
        <shortName evidence="1">IPTase</shortName>
    </alternativeName>
</protein>
<keyword id="KW-0067">ATP-binding</keyword>
<keyword id="KW-0460">Magnesium</keyword>
<keyword id="KW-0547">Nucleotide-binding</keyword>
<keyword id="KW-0808">Transferase</keyword>
<keyword id="KW-0819">tRNA processing</keyword>
<accession>C1CQE9</accession>
<dbReference type="EC" id="2.5.1.75" evidence="1"/>
<dbReference type="EMBL" id="CP000921">
    <property type="protein sequence ID" value="ACO23398.1"/>
    <property type="molecule type" value="Genomic_DNA"/>
</dbReference>
<dbReference type="RefSeq" id="WP_000850180.1">
    <property type="nucleotide sequence ID" value="NC_012469.1"/>
</dbReference>
<dbReference type="SMR" id="C1CQE9"/>
<dbReference type="KEGG" id="snt:SPT_0695"/>
<dbReference type="HOGENOM" id="CLU_032616_0_1_9"/>
<dbReference type="GO" id="GO:0005524">
    <property type="term" value="F:ATP binding"/>
    <property type="evidence" value="ECO:0007669"/>
    <property type="project" value="UniProtKB-UniRule"/>
</dbReference>
<dbReference type="GO" id="GO:0052381">
    <property type="term" value="F:tRNA dimethylallyltransferase activity"/>
    <property type="evidence" value="ECO:0007669"/>
    <property type="project" value="UniProtKB-UniRule"/>
</dbReference>
<dbReference type="GO" id="GO:0006400">
    <property type="term" value="P:tRNA modification"/>
    <property type="evidence" value="ECO:0007669"/>
    <property type="project" value="TreeGrafter"/>
</dbReference>
<dbReference type="Gene3D" id="3.40.50.300">
    <property type="entry name" value="P-loop containing nucleotide triphosphate hydrolases"/>
    <property type="match status" value="1"/>
</dbReference>
<dbReference type="HAMAP" id="MF_00185">
    <property type="entry name" value="IPP_trans"/>
    <property type="match status" value="1"/>
</dbReference>
<dbReference type="InterPro" id="IPR039657">
    <property type="entry name" value="Dimethylallyltransferase"/>
</dbReference>
<dbReference type="InterPro" id="IPR018022">
    <property type="entry name" value="IPT"/>
</dbReference>
<dbReference type="InterPro" id="IPR027417">
    <property type="entry name" value="P-loop_NTPase"/>
</dbReference>
<dbReference type="NCBIfam" id="TIGR00174">
    <property type="entry name" value="miaA"/>
    <property type="match status" value="1"/>
</dbReference>
<dbReference type="PANTHER" id="PTHR11088">
    <property type="entry name" value="TRNA DIMETHYLALLYLTRANSFERASE"/>
    <property type="match status" value="1"/>
</dbReference>
<dbReference type="PANTHER" id="PTHR11088:SF60">
    <property type="entry name" value="TRNA DIMETHYLALLYLTRANSFERASE"/>
    <property type="match status" value="1"/>
</dbReference>
<dbReference type="Pfam" id="PF01715">
    <property type="entry name" value="IPPT"/>
    <property type="match status" value="1"/>
</dbReference>
<dbReference type="SUPFAM" id="SSF52540">
    <property type="entry name" value="P-loop containing nucleoside triphosphate hydrolases"/>
    <property type="match status" value="2"/>
</dbReference>